<accession>Q8VYR5</accession>
<accession>Q8L9P6</accession>
<accession>Q9SZT3</accession>
<sequence length="444" mass="50457">MKFLMQSISGRNRSLVRALVSRRYFASSPEEIAKRNYANDLSEYNTAVNSVTAQRRHYLLRDVYDDMKLDGVQPTADIFHSFVVGTMKGARLSDAFFFREEMKAMGIAPDVNLYNFLISTCGKCKNGKEAIRVYDEMKRYDVKPNGQTFVCLLNACAVSGQLDLVYAIVRDMTAAGVGLNQFCYAGLITAHLNKQPRPDNLSTKILEFVEQSKGWSAIDSSRKSAEDVMFSISEEELYNIPTADYSHRTRFLQRNLTVYHVAFSALADLKDVKATEALLEMLKKDGKDTDTYCMLQIMRCYLHSQDFENGLKLFQDYMSADKIPAMELYTTLIEGAMTGYTDNGMKIAQDTLIQMNERNFFLDPRTGSNLLLKAAGEKTGGYTVANMIWDLMLARNILPTLAAVEAYYKGLKEREIPEDDPRLMLVTRTYNNLRLREGTLPNRR</sequence>
<comment type="subcellular location">
    <subcellularLocation>
        <location evidence="1 4">Mitochondrion</location>
    </subcellularLocation>
</comment>
<comment type="similarity">
    <text evidence="3">Belongs to the PPR family. P subfamily.</text>
</comment>
<comment type="sequence caution" evidence="3">
    <conflict type="erroneous gene model prediction">
        <sequence resource="EMBL-CDS" id="CAA21471"/>
    </conflict>
</comment>
<comment type="sequence caution" evidence="3">
    <conflict type="erroneous gene model prediction">
        <sequence resource="EMBL-CDS" id="CAB81494"/>
    </conflict>
</comment>
<comment type="online information" name="Pentatricopeptide repeat proteins">
    <link uri="https://ppr.plantenergy.uwa.edu.au"/>
</comment>
<feature type="transit peptide" description="Mitochondrion" evidence="2">
    <location>
        <begin position="1"/>
        <end position="25"/>
    </location>
</feature>
<feature type="chain" id="PRO_0000363468" description="Pentatricopeptide repeat-containing protein At4g35850, mitochondrial">
    <location>
        <begin position="26"/>
        <end position="444"/>
    </location>
</feature>
<feature type="repeat" description="PPR 1">
    <location>
        <begin position="40"/>
        <end position="74"/>
    </location>
</feature>
<feature type="repeat" description="PPR 2">
    <location>
        <begin position="75"/>
        <end position="109"/>
    </location>
</feature>
<feature type="repeat" description="PPR 3">
    <location>
        <begin position="110"/>
        <end position="144"/>
    </location>
</feature>
<feature type="repeat" description="PPR 4">
    <location>
        <begin position="145"/>
        <end position="179"/>
    </location>
</feature>
<feature type="repeat" description="PPR 5">
    <location>
        <begin position="255"/>
        <end position="289"/>
    </location>
</feature>
<feature type="repeat" description="PPR 6">
    <location>
        <begin position="290"/>
        <end position="325"/>
    </location>
</feature>
<feature type="sequence conflict" description="In Ref. 4; AAM65849." evidence="3" ref="4">
    <original>M</original>
    <variation>V</variation>
    <location>
        <position position="294"/>
    </location>
</feature>
<proteinExistence type="evidence at protein level"/>
<reference key="1">
    <citation type="journal article" date="1999" name="Nature">
        <title>Sequence and analysis of chromosome 4 of the plant Arabidopsis thaliana.</title>
        <authorList>
            <person name="Mayer K.F.X."/>
            <person name="Schueller C."/>
            <person name="Wambutt R."/>
            <person name="Murphy G."/>
            <person name="Volckaert G."/>
            <person name="Pohl T."/>
            <person name="Duesterhoeft A."/>
            <person name="Stiekema W."/>
            <person name="Entian K.-D."/>
            <person name="Terryn N."/>
            <person name="Harris B."/>
            <person name="Ansorge W."/>
            <person name="Brandt P."/>
            <person name="Grivell L.A."/>
            <person name="Rieger M."/>
            <person name="Weichselgartner M."/>
            <person name="de Simone V."/>
            <person name="Obermaier B."/>
            <person name="Mache R."/>
            <person name="Mueller M."/>
            <person name="Kreis M."/>
            <person name="Delseny M."/>
            <person name="Puigdomenech P."/>
            <person name="Watson M."/>
            <person name="Schmidtheini T."/>
            <person name="Reichert B."/>
            <person name="Portetelle D."/>
            <person name="Perez-Alonso M."/>
            <person name="Boutry M."/>
            <person name="Bancroft I."/>
            <person name="Vos P."/>
            <person name="Hoheisel J."/>
            <person name="Zimmermann W."/>
            <person name="Wedler H."/>
            <person name="Ridley P."/>
            <person name="Langham S.-A."/>
            <person name="McCullagh B."/>
            <person name="Bilham L."/>
            <person name="Robben J."/>
            <person name="van der Schueren J."/>
            <person name="Grymonprez B."/>
            <person name="Chuang Y.-J."/>
            <person name="Vandenbussche F."/>
            <person name="Braeken M."/>
            <person name="Weltjens I."/>
            <person name="Voet M."/>
            <person name="Bastiaens I."/>
            <person name="Aert R."/>
            <person name="Defoor E."/>
            <person name="Weitzenegger T."/>
            <person name="Bothe G."/>
            <person name="Ramsperger U."/>
            <person name="Hilbert H."/>
            <person name="Braun M."/>
            <person name="Holzer E."/>
            <person name="Brandt A."/>
            <person name="Peters S."/>
            <person name="van Staveren M."/>
            <person name="Dirkse W."/>
            <person name="Mooijman P."/>
            <person name="Klein Lankhorst R."/>
            <person name="Rose M."/>
            <person name="Hauf J."/>
            <person name="Koetter P."/>
            <person name="Berneiser S."/>
            <person name="Hempel S."/>
            <person name="Feldpausch M."/>
            <person name="Lamberth S."/>
            <person name="Van den Daele H."/>
            <person name="De Keyser A."/>
            <person name="Buysshaert C."/>
            <person name="Gielen J."/>
            <person name="Villarroel R."/>
            <person name="De Clercq R."/>
            <person name="van Montagu M."/>
            <person name="Rogers J."/>
            <person name="Cronin A."/>
            <person name="Quail M.A."/>
            <person name="Bray-Allen S."/>
            <person name="Clark L."/>
            <person name="Doggett J."/>
            <person name="Hall S."/>
            <person name="Kay M."/>
            <person name="Lennard N."/>
            <person name="McLay K."/>
            <person name="Mayes R."/>
            <person name="Pettett A."/>
            <person name="Rajandream M.A."/>
            <person name="Lyne M."/>
            <person name="Benes V."/>
            <person name="Rechmann S."/>
            <person name="Borkova D."/>
            <person name="Bloecker H."/>
            <person name="Scharfe M."/>
            <person name="Grimm M."/>
            <person name="Loehnert T.-H."/>
            <person name="Dose S."/>
            <person name="de Haan M."/>
            <person name="Maarse A.C."/>
            <person name="Schaefer M."/>
            <person name="Mueller-Auer S."/>
            <person name="Gabel C."/>
            <person name="Fuchs M."/>
            <person name="Fartmann B."/>
            <person name="Granderath K."/>
            <person name="Dauner D."/>
            <person name="Herzl A."/>
            <person name="Neumann S."/>
            <person name="Argiriou A."/>
            <person name="Vitale D."/>
            <person name="Liguori R."/>
            <person name="Piravandi E."/>
            <person name="Massenet O."/>
            <person name="Quigley F."/>
            <person name="Clabauld G."/>
            <person name="Muendlein A."/>
            <person name="Felber R."/>
            <person name="Schnabl S."/>
            <person name="Hiller R."/>
            <person name="Schmidt W."/>
            <person name="Lecharny A."/>
            <person name="Aubourg S."/>
            <person name="Chefdor F."/>
            <person name="Cooke R."/>
            <person name="Berger C."/>
            <person name="Monfort A."/>
            <person name="Casacuberta E."/>
            <person name="Gibbons T."/>
            <person name="Weber N."/>
            <person name="Vandenbol M."/>
            <person name="Bargues M."/>
            <person name="Terol J."/>
            <person name="Torres A."/>
            <person name="Perez-Perez A."/>
            <person name="Purnelle B."/>
            <person name="Bent E."/>
            <person name="Johnson S."/>
            <person name="Tacon D."/>
            <person name="Jesse T."/>
            <person name="Heijnen L."/>
            <person name="Schwarz S."/>
            <person name="Scholler P."/>
            <person name="Heber S."/>
            <person name="Francs P."/>
            <person name="Bielke C."/>
            <person name="Frishman D."/>
            <person name="Haase D."/>
            <person name="Lemcke K."/>
            <person name="Mewes H.-W."/>
            <person name="Stocker S."/>
            <person name="Zaccaria P."/>
            <person name="Bevan M."/>
            <person name="Wilson R.K."/>
            <person name="de la Bastide M."/>
            <person name="Habermann K."/>
            <person name="Parnell L."/>
            <person name="Dedhia N."/>
            <person name="Gnoj L."/>
            <person name="Schutz K."/>
            <person name="Huang E."/>
            <person name="Spiegel L."/>
            <person name="Sekhon M."/>
            <person name="Murray J."/>
            <person name="Sheet P."/>
            <person name="Cordes M."/>
            <person name="Abu-Threideh J."/>
            <person name="Stoneking T."/>
            <person name="Kalicki J."/>
            <person name="Graves T."/>
            <person name="Harmon G."/>
            <person name="Edwards J."/>
            <person name="Latreille P."/>
            <person name="Courtney L."/>
            <person name="Cloud J."/>
            <person name="Abbott A."/>
            <person name="Scott K."/>
            <person name="Johnson D."/>
            <person name="Minx P."/>
            <person name="Bentley D."/>
            <person name="Fulton B."/>
            <person name="Miller N."/>
            <person name="Greco T."/>
            <person name="Kemp K."/>
            <person name="Kramer J."/>
            <person name="Fulton L."/>
            <person name="Mardis E."/>
            <person name="Dante M."/>
            <person name="Pepin K."/>
            <person name="Hillier L.W."/>
            <person name="Nelson J."/>
            <person name="Spieth J."/>
            <person name="Ryan E."/>
            <person name="Andrews S."/>
            <person name="Geisel C."/>
            <person name="Layman D."/>
            <person name="Du H."/>
            <person name="Ali J."/>
            <person name="Berghoff A."/>
            <person name="Jones K."/>
            <person name="Drone K."/>
            <person name="Cotton M."/>
            <person name="Joshu C."/>
            <person name="Antonoiu B."/>
            <person name="Zidanic M."/>
            <person name="Strong C."/>
            <person name="Sun H."/>
            <person name="Lamar B."/>
            <person name="Yordan C."/>
            <person name="Ma P."/>
            <person name="Zhong J."/>
            <person name="Preston R."/>
            <person name="Vil D."/>
            <person name="Shekher M."/>
            <person name="Matero A."/>
            <person name="Shah R."/>
            <person name="Swaby I.K."/>
            <person name="O'Shaughnessy A."/>
            <person name="Rodriguez M."/>
            <person name="Hoffman J."/>
            <person name="Till S."/>
            <person name="Granat S."/>
            <person name="Shohdy N."/>
            <person name="Hasegawa A."/>
            <person name="Hameed A."/>
            <person name="Lodhi M."/>
            <person name="Johnson A."/>
            <person name="Chen E."/>
            <person name="Marra M.A."/>
            <person name="Martienssen R."/>
            <person name="McCombie W.R."/>
        </authorList>
    </citation>
    <scope>NUCLEOTIDE SEQUENCE [LARGE SCALE GENOMIC DNA]</scope>
    <source>
        <strain>cv. Columbia</strain>
    </source>
</reference>
<reference key="2">
    <citation type="journal article" date="2017" name="Plant J.">
        <title>Araport11: a complete reannotation of the Arabidopsis thaliana reference genome.</title>
        <authorList>
            <person name="Cheng C.Y."/>
            <person name="Krishnakumar V."/>
            <person name="Chan A.P."/>
            <person name="Thibaud-Nissen F."/>
            <person name="Schobel S."/>
            <person name="Town C.D."/>
        </authorList>
    </citation>
    <scope>GENOME REANNOTATION</scope>
    <source>
        <strain>cv. Columbia</strain>
    </source>
</reference>
<reference key="3">
    <citation type="journal article" date="2003" name="Science">
        <title>Empirical analysis of transcriptional activity in the Arabidopsis genome.</title>
        <authorList>
            <person name="Yamada K."/>
            <person name="Lim J."/>
            <person name="Dale J.M."/>
            <person name="Chen H."/>
            <person name="Shinn P."/>
            <person name="Palm C.J."/>
            <person name="Southwick A.M."/>
            <person name="Wu H.C."/>
            <person name="Kim C.J."/>
            <person name="Nguyen M."/>
            <person name="Pham P.K."/>
            <person name="Cheuk R.F."/>
            <person name="Karlin-Newmann G."/>
            <person name="Liu S.X."/>
            <person name="Lam B."/>
            <person name="Sakano H."/>
            <person name="Wu T."/>
            <person name="Yu G."/>
            <person name="Miranda M."/>
            <person name="Quach H.L."/>
            <person name="Tripp M."/>
            <person name="Chang C.H."/>
            <person name="Lee J.M."/>
            <person name="Toriumi M.J."/>
            <person name="Chan M.M."/>
            <person name="Tang C.C."/>
            <person name="Onodera C.S."/>
            <person name="Deng J.M."/>
            <person name="Akiyama K."/>
            <person name="Ansari Y."/>
            <person name="Arakawa T."/>
            <person name="Banh J."/>
            <person name="Banno F."/>
            <person name="Bowser L."/>
            <person name="Brooks S.Y."/>
            <person name="Carninci P."/>
            <person name="Chao Q."/>
            <person name="Choy N."/>
            <person name="Enju A."/>
            <person name="Goldsmith A.D."/>
            <person name="Gurjal M."/>
            <person name="Hansen N.F."/>
            <person name="Hayashizaki Y."/>
            <person name="Johnson-Hopson C."/>
            <person name="Hsuan V.W."/>
            <person name="Iida K."/>
            <person name="Karnes M."/>
            <person name="Khan S."/>
            <person name="Koesema E."/>
            <person name="Ishida J."/>
            <person name="Jiang P.X."/>
            <person name="Jones T."/>
            <person name="Kawai J."/>
            <person name="Kamiya A."/>
            <person name="Meyers C."/>
            <person name="Nakajima M."/>
            <person name="Narusaka M."/>
            <person name="Seki M."/>
            <person name="Sakurai T."/>
            <person name="Satou M."/>
            <person name="Tamse R."/>
            <person name="Vaysberg M."/>
            <person name="Wallender E.K."/>
            <person name="Wong C."/>
            <person name="Yamamura Y."/>
            <person name="Yuan S."/>
            <person name="Shinozaki K."/>
            <person name="Davis R.W."/>
            <person name="Theologis A."/>
            <person name="Ecker J.R."/>
        </authorList>
    </citation>
    <scope>NUCLEOTIDE SEQUENCE [LARGE SCALE MRNA]</scope>
    <source>
        <strain>cv. Columbia</strain>
    </source>
</reference>
<reference key="4">
    <citation type="submission" date="2002-03" db="EMBL/GenBank/DDBJ databases">
        <title>Full-length cDNA from Arabidopsis thaliana.</title>
        <authorList>
            <person name="Brover V.V."/>
            <person name="Troukhan M.E."/>
            <person name="Alexandrov N.A."/>
            <person name="Lu Y.-P."/>
            <person name="Flavell R.B."/>
            <person name="Feldmann K.A."/>
        </authorList>
    </citation>
    <scope>NUCLEOTIDE SEQUENCE [LARGE SCALE MRNA]</scope>
</reference>
<reference key="5">
    <citation type="journal article" date="2004" name="Plant Cell">
        <title>Experimental analysis of the Arabidopsis mitochondrial proteome highlights signaling and regulatory components, provides assessment of targeting prediction programs, and indicates plant-specific mitochondrial proteins.</title>
        <authorList>
            <person name="Heazlewood J.L."/>
            <person name="Tonti-Filippini J.S."/>
            <person name="Gout A.M."/>
            <person name="Day D.A."/>
            <person name="Whelan J."/>
            <person name="Millar A.H."/>
        </authorList>
    </citation>
    <scope>IDENTIFICATION BY MASS SPECTROMETRY</scope>
    <scope>SUBCELLULAR LOCATION [LARGE SCALE ANALYSIS]</scope>
    <source>
        <strain>cv. Landsberg erecta</strain>
    </source>
</reference>
<reference key="6">
    <citation type="journal article" date="2004" name="Plant Cell">
        <title>Genome-wide analysis of Arabidopsis pentatricopeptide repeat proteins reveals their essential role in organelle biogenesis.</title>
        <authorList>
            <person name="Lurin C."/>
            <person name="Andres C."/>
            <person name="Aubourg S."/>
            <person name="Bellaoui M."/>
            <person name="Bitton F."/>
            <person name="Bruyere C."/>
            <person name="Caboche M."/>
            <person name="Debast C."/>
            <person name="Gualberto J."/>
            <person name="Hoffmann B."/>
            <person name="Lecharny A."/>
            <person name="Le Ret M."/>
            <person name="Martin-Magniette M.-L."/>
            <person name="Mireau H."/>
            <person name="Peeters N."/>
            <person name="Renou J.-P."/>
            <person name="Szurek B."/>
            <person name="Taconnat L."/>
            <person name="Small I."/>
        </authorList>
    </citation>
    <scope>GENE FAMILY</scope>
</reference>
<reference key="7">
    <citation type="journal article" date="2015" name="J. Exp. Bot.">
        <title>Identification of cleavage sites and substrate proteins for two mitochondrial intermediate peptidases in Arabidopsis thaliana.</title>
        <authorList>
            <person name="Carrie C."/>
            <person name="Venne A.S."/>
            <person name="Zahedi R.P."/>
            <person name="Soll J."/>
        </authorList>
    </citation>
    <scope>IDENTIFICATION BY MASS SPECTROMETRY</scope>
    <scope>CLEAVAGE OF TRANSIT PEPTIDE AFTER PHE-25</scope>
</reference>
<protein>
    <recommendedName>
        <fullName>Pentatricopeptide repeat-containing protein At4g35850, mitochondrial</fullName>
    </recommendedName>
</protein>
<dbReference type="EMBL" id="AL031986">
    <property type="protein sequence ID" value="CAA21471.1"/>
    <property type="status" value="ALT_SEQ"/>
    <property type="molecule type" value="Genomic_DNA"/>
</dbReference>
<dbReference type="EMBL" id="AL161588">
    <property type="protein sequence ID" value="CAB81494.1"/>
    <property type="status" value="ALT_SEQ"/>
    <property type="molecule type" value="Genomic_DNA"/>
</dbReference>
<dbReference type="EMBL" id="CP002687">
    <property type="protein sequence ID" value="AEE86580.1"/>
    <property type="molecule type" value="Genomic_DNA"/>
</dbReference>
<dbReference type="EMBL" id="AY070070">
    <property type="protein sequence ID" value="AAL49827.1"/>
    <property type="molecule type" value="mRNA"/>
</dbReference>
<dbReference type="EMBL" id="AY091334">
    <property type="protein sequence ID" value="AAM14273.1"/>
    <property type="molecule type" value="mRNA"/>
</dbReference>
<dbReference type="EMBL" id="AY088310">
    <property type="protein sequence ID" value="AAM65849.1"/>
    <property type="molecule type" value="mRNA"/>
</dbReference>
<dbReference type="PIR" id="T04695">
    <property type="entry name" value="T04695"/>
</dbReference>
<dbReference type="RefSeq" id="NP_567990.1">
    <property type="nucleotide sequence ID" value="NM_119751.3"/>
</dbReference>
<dbReference type="SMR" id="Q8VYR5"/>
<dbReference type="BioGRID" id="15021">
    <property type="interactions" value="3"/>
</dbReference>
<dbReference type="FunCoup" id="Q8VYR5">
    <property type="interactions" value="1556"/>
</dbReference>
<dbReference type="IntAct" id="Q8VYR5">
    <property type="interactions" value="2"/>
</dbReference>
<dbReference type="STRING" id="3702.Q8VYR5"/>
<dbReference type="PaxDb" id="3702-AT4G35850.1"/>
<dbReference type="ProteomicsDB" id="249245"/>
<dbReference type="EnsemblPlants" id="AT4G35850.1">
    <property type="protein sequence ID" value="AT4G35850.1"/>
    <property type="gene ID" value="AT4G35850"/>
</dbReference>
<dbReference type="GeneID" id="829739"/>
<dbReference type="Gramene" id="AT4G35850.1">
    <property type="protein sequence ID" value="AT4G35850.1"/>
    <property type="gene ID" value="AT4G35850"/>
</dbReference>
<dbReference type="KEGG" id="ath:AT4G35850"/>
<dbReference type="Araport" id="AT4G35850"/>
<dbReference type="TAIR" id="AT4G35850"/>
<dbReference type="eggNOG" id="KOG4197">
    <property type="taxonomic scope" value="Eukaryota"/>
</dbReference>
<dbReference type="HOGENOM" id="CLU_038751_0_0_1"/>
<dbReference type="InParanoid" id="Q8VYR5"/>
<dbReference type="OMA" id="SENIMMN"/>
<dbReference type="PhylomeDB" id="Q8VYR5"/>
<dbReference type="CD-CODE" id="4299E36E">
    <property type="entry name" value="Nucleolus"/>
</dbReference>
<dbReference type="PRO" id="PR:Q8VYR5"/>
<dbReference type="Proteomes" id="UP000006548">
    <property type="component" value="Chromosome 4"/>
</dbReference>
<dbReference type="ExpressionAtlas" id="Q8VYR5">
    <property type="expression patterns" value="baseline and differential"/>
</dbReference>
<dbReference type="GO" id="GO:0005739">
    <property type="term" value="C:mitochondrion"/>
    <property type="evidence" value="ECO:0007005"/>
    <property type="project" value="TAIR"/>
</dbReference>
<dbReference type="GO" id="GO:0003729">
    <property type="term" value="F:mRNA binding"/>
    <property type="evidence" value="ECO:0000314"/>
    <property type="project" value="TAIR"/>
</dbReference>
<dbReference type="FunFam" id="1.25.40.10:FF:000388">
    <property type="entry name" value="Pentatricopeptide repeat-containing protein, mitochondrial"/>
    <property type="match status" value="1"/>
</dbReference>
<dbReference type="FunFam" id="1.25.40.10:FF:000434">
    <property type="entry name" value="Pentatricopeptide repeat-containing protein, mitochondrial"/>
    <property type="match status" value="1"/>
</dbReference>
<dbReference type="Gene3D" id="1.25.40.10">
    <property type="entry name" value="Tetratricopeptide repeat domain"/>
    <property type="match status" value="2"/>
</dbReference>
<dbReference type="InterPro" id="IPR002885">
    <property type="entry name" value="Pentatricopeptide_rpt"/>
</dbReference>
<dbReference type="InterPro" id="IPR011990">
    <property type="entry name" value="TPR-like_helical_dom_sf"/>
</dbReference>
<dbReference type="NCBIfam" id="TIGR00756">
    <property type="entry name" value="PPR"/>
    <property type="match status" value="1"/>
</dbReference>
<dbReference type="PANTHER" id="PTHR47801">
    <property type="entry name" value="OS05G0145600 PROTEIN"/>
    <property type="match status" value="1"/>
</dbReference>
<dbReference type="PANTHER" id="PTHR47801:SF1">
    <property type="entry name" value="OS05G0145600 PROTEIN"/>
    <property type="match status" value="1"/>
</dbReference>
<dbReference type="Pfam" id="PF13041">
    <property type="entry name" value="PPR_2"/>
    <property type="match status" value="1"/>
</dbReference>
<dbReference type="PROSITE" id="PS51375">
    <property type="entry name" value="PPR"/>
    <property type="match status" value="7"/>
</dbReference>
<evidence type="ECO:0000269" key="1">
    <source>
    </source>
</evidence>
<evidence type="ECO:0000269" key="2">
    <source>
    </source>
</evidence>
<evidence type="ECO:0000305" key="3"/>
<evidence type="ECO:0000305" key="4">
    <source>
    </source>
</evidence>
<organism>
    <name type="scientific">Arabidopsis thaliana</name>
    <name type="common">Mouse-ear cress</name>
    <dbReference type="NCBI Taxonomy" id="3702"/>
    <lineage>
        <taxon>Eukaryota</taxon>
        <taxon>Viridiplantae</taxon>
        <taxon>Streptophyta</taxon>
        <taxon>Embryophyta</taxon>
        <taxon>Tracheophyta</taxon>
        <taxon>Spermatophyta</taxon>
        <taxon>Magnoliopsida</taxon>
        <taxon>eudicotyledons</taxon>
        <taxon>Gunneridae</taxon>
        <taxon>Pentapetalae</taxon>
        <taxon>rosids</taxon>
        <taxon>malvids</taxon>
        <taxon>Brassicales</taxon>
        <taxon>Brassicaceae</taxon>
        <taxon>Camelineae</taxon>
        <taxon>Arabidopsis</taxon>
    </lineage>
</organism>
<name>PP351_ARATH</name>
<gene>
    <name type="ordered locus">At4g35850</name>
    <name type="ORF">F4B14_120</name>
</gene>
<keyword id="KW-0496">Mitochondrion</keyword>
<keyword id="KW-1185">Reference proteome</keyword>
<keyword id="KW-0677">Repeat</keyword>
<keyword id="KW-0809">Transit peptide</keyword>